<keyword id="KW-0934">Plastid</keyword>
<comment type="subcellular location">
    <subcellularLocation>
        <location>Plastid</location>
    </subcellularLocation>
</comment>
<comment type="similarity">
    <text evidence="1">Belongs to the A.longa ORF167/ORF288 family.</text>
</comment>
<feature type="chain" id="PRO_0000217422" description="Uncharacterized 20.3 kDa protein in rpl12-rps7 intergenic region">
    <location>
        <begin position="1"/>
        <end position="167"/>
    </location>
</feature>
<proteinExistence type="inferred from homology"/>
<sequence>MNSNEIKAILEKIKKKLTNQVNKIKNIFIYIIYLKEYLNQLYEKKYFYREINDENYWKKYSNIEIYINGKKIGTSENINKSEYILLDLFMNGPIKININKKDKIYEITNIRKLRYLMLLYLGIVSKINIVFQQITPPTLNYEKNYKTEEIVDNYFVLHVYVWNEIKK</sequence>
<organism>
    <name type="scientific">Euglena longa</name>
    <name type="common">Euglenophycean alga</name>
    <name type="synonym">Astasia longa</name>
    <dbReference type="NCBI Taxonomy" id="3037"/>
    <lineage>
        <taxon>Eukaryota</taxon>
        <taxon>Discoba</taxon>
        <taxon>Euglenozoa</taxon>
        <taxon>Euglenida</taxon>
        <taxon>Spirocuta</taxon>
        <taxon>Euglenophyceae</taxon>
        <taxon>Euglenales</taxon>
        <taxon>Euglenaceae</taxon>
        <taxon>Euglena</taxon>
    </lineage>
</organism>
<name>YCY6_EUGLO</name>
<geneLocation type="non-photosynthetic plastid"/>
<protein>
    <recommendedName>
        <fullName>Uncharacterized 20.3 kDa protein in rpl12-rps7 intergenic region</fullName>
    </recommendedName>
    <alternativeName>
        <fullName>ORF167</fullName>
    </alternativeName>
</protein>
<dbReference type="EMBL" id="AJ294725">
    <property type="protein sequence ID" value="CAC24608.1"/>
    <property type="molecule type" value="Genomic_DNA"/>
</dbReference>
<dbReference type="PIR" id="S14921">
    <property type="entry name" value="S14921"/>
</dbReference>
<dbReference type="RefSeq" id="NP_074997.1">
    <property type="nucleotide sequence ID" value="NC_002652.1"/>
</dbReference>
<dbReference type="GeneID" id="1457320"/>
<dbReference type="GO" id="GO:0009536">
    <property type="term" value="C:plastid"/>
    <property type="evidence" value="ECO:0007669"/>
    <property type="project" value="UniProtKB-SubCell"/>
</dbReference>
<dbReference type="InterPro" id="IPR006851">
    <property type="entry name" value="DUF613"/>
</dbReference>
<dbReference type="Pfam" id="PF04764">
    <property type="entry name" value="DUF613"/>
    <property type="match status" value="1"/>
</dbReference>
<reference key="1">
    <citation type="journal article" date="1990" name="Mol. Gen. Genet.">
        <title>Genes for the plastid elongation factor Tu and ribosomal protein S7 and six tRNA genes on the 73 kb DNA from Astasia longa that resembles the chloroplast DNA of Euglena.</title>
        <authorList>
            <person name="Siemeister G."/>
            <person name="Buchholz C."/>
            <person name="Hachtel W."/>
        </authorList>
    </citation>
    <scope>NUCLEOTIDE SEQUENCE [GENOMIC DNA]</scope>
    <source>
        <strain>CCAP 1204-17a</strain>
    </source>
</reference>
<reference key="2">
    <citation type="journal article" date="1994" name="Curr. Genet.">
        <title>Genes for components of the chloroplast translational apparatus are conserved in the reduced 73-kb plastid DNA of the nonphotosynthetic euglenoid flagellate Astasia longa.</title>
        <authorList>
            <person name="Gockel G."/>
            <person name="Hachtel W."/>
            <person name="Baier S."/>
            <person name="Fliss C."/>
            <person name="Henke M."/>
        </authorList>
    </citation>
    <scope>NUCLEOTIDE SEQUENCE [GENOMIC DNA]</scope>
    <source>
        <strain>CCAP 1204-17a</strain>
    </source>
</reference>
<reference key="3">
    <citation type="journal article" date="2000" name="Protist">
        <title>Complete gene map of the plastid genome of the nonphotosynthetic euglenoid flagellate Astasia longa.</title>
        <authorList>
            <person name="Gockel G."/>
            <person name="Hachtel W."/>
        </authorList>
    </citation>
    <scope>NUCLEOTIDE SEQUENCE [LARGE SCALE GENOMIC DNA]</scope>
    <source>
        <strain>CCAP 1204-17a</strain>
    </source>
</reference>
<evidence type="ECO:0000305" key="1"/>
<accession>P14759</accession>